<reference key="1">
    <citation type="submission" date="2000-03" db="EMBL/GenBank/DDBJ databases">
        <title>Dfz4 acts in the Wg pathway.</title>
        <authorList>
            <person name="Xu Y.K."/>
            <person name="Nusse R."/>
        </authorList>
    </citation>
    <scope>NUCLEOTIDE SEQUENCE [MRNA]</scope>
</reference>
<reference key="2">
    <citation type="journal article" date="2000" name="Science">
        <title>The genome sequence of Drosophila melanogaster.</title>
        <authorList>
            <person name="Adams M.D."/>
            <person name="Celniker S.E."/>
            <person name="Holt R.A."/>
            <person name="Evans C.A."/>
            <person name="Gocayne J.D."/>
            <person name="Amanatides P.G."/>
            <person name="Scherer S.E."/>
            <person name="Li P.W."/>
            <person name="Hoskins R.A."/>
            <person name="Galle R.F."/>
            <person name="George R.A."/>
            <person name="Lewis S.E."/>
            <person name="Richards S."/>
            <person name="Ashburner M."/>
            <person name="Henderson S.N."/>
            <person name="Sutton G.G."/>
            <person name="Wortman J.R."/>
            <person name="Yandell M.D."/>
            <person name="Zhang Q."/>
            <person name="Chen L.X."/>
            <person name="Brandon R.C."/>
            <person name="Rogers Y.-H.C."/>
            <person name="Blazej R.G."/>
            <person name="Champe M."/>
            <person name="Pfeiffer B.D."/>
            <person name="Wan K.H."/>
            <person name="Doyle C."/>
            <person name="Baxter E.G."/>
            <person name="Helt G."/>
            <person name="Nelson C.R."/>
            <person name="Miklos G.L.G."/>
            <person name="Abril J.F."/>
            <person name="Agbayani A."/>
            <person name="An H.-J."/>
            <person name="Andrews-Pfannkoch C."/>
            <person name="Baldwin D."/>
            <person name="Ballew R.M."/>
            <person name="Basu A."/>
            <person name="Baxendale J."/>
            <person name="Bayraktaroglu L."/>
            <person name="Beasley E.M."/>
            <person name="Beeson K.Y."/>
            <person name="Benos P.V."/>
            <person name="Berman B.P."/>
            <person name="Bhandari D."/>
            <person name="Bolshakov S."/>
            <person name="Borkova D."/>
            <person name="Botchan M.R."/>
            <person name="Bouck J."/>
            <person name="Brokstein P."/>
            <person name="Brottier P."/>
            <person name="Burtis K.C."/>
            <person name="Busam D.A."/>
            <person name="Butler H."/>
            <person name="Cadieu E."/>
            <person name="Center A."/>
            <person name="Chandra I."/>
            <person name="Cherry J.M."/>
            <person name="Cawley S."/>
            <person name="Dahlke C."/>
            <person name="Davenport L.B."/>
            <person name="Davies P."/>
            <person name="de Pablos B."/>
            <person name="Delcher A."/>
            <person name="Deng Z."/>
            <person name="Mays A.D."/>
            <person name="Dew I."/>
            <person name="Dietz S.M."/>
            <person name="Dodson K."/>
            <person name="Doup L.E."/>
            <person name="Downes M."/>
            <person name="Dugan-Rocha S."/>
            <person name="Dunkov B.C."/>
            <person name="Dunn P."/>
            <person name="Durbin K.J."/>
            <person name="Evangelista C.C."/>
            <person name="Ferraz C."/>
            <person name="Ferriera S."/>
            <person name="Fleischmann W."/>
            <person name="Fosler C."/>
            <person name="Gabrielian A.E."/>
            <person name="Garg N.S."/>
            <person name="Gelbart W.M."/>
            <person name="Glasser K."/>
            <person name="Glodek A."/>
            <person name="Gong F."/>
            <person name="Gorrell J.H."/>
            <person name="Gu Z."/>
            <person name="Guan P."/>
            <person name="Harris M."/>
            <person name="Harris N.L."/>
            <person name="Harvey D.A."/>
            <person name="Heiman T.J."/>
            <person name="Hernandez J.R."/>
            <person name="Houck J."/>
            <person name="Hostin D."/>
            <person name="Houston K.A."/>
            <person name="Howland T.J."/>
            <person name="Wei M.-H."/>
            <person name="Ibegwam C."/>
            <person name="Jalali M."/>
            <person name="Kalush F."/>
            <person name="Karpen G.H."/>
            <person name="Ke Z."/>
            <person name="Kennison J.A."/>
            <person name="Ketchum K.A."/>
            <person name="Kimmel B.E."/>
            <person name="Kodira C.D."/>
            <person name="Kraft C.L."/>
            <person name="Kravitz S."/>
            <person name="Kulp D."/>
            <person name="Lai Z."/>
            <person name="Lasko P."/>
            <person name="Lei Y."/>
            <person name="Levitsky A.A."/>
            <person name="Li J.H."/>
            <person name="Li Z."/>
            <person name="Liang Y."/>
            <person name="Lin X."/>
            <person name="Liu X."/>
            <person name="Mattei B."/>
            <person name="McIntosh T.C."/>
            <person name="McLeod M.P."/>
            <person name="McPherson D."/>
            <person name="Merkulov G."/>
            <person name="Milshina N.V."/>
            <person name="Mobarry C."/>
            <person name="Morris J."/>
            <person name="Moshrefi A."/>
            <person name="Mount S.M."/>
            <person name="Moy M."/>
            <person name="Murphy B."/>
            <person name="Murphy L."/>
            <person name="Muzny D.M."/>
            <person name="Nelson D.L."/>
            <person name="Nelson D.R."/>
            <person name="Nelson K.A."/>
            <person name="Nixon K."/>
            <person name="Nusskern D.R."/>
            <person name="Pacleb J.M."/>
            <person name="Palazzolo M."/>
            <person name="Pittman G.S."/>
            <person name="Pan S."/>
            <person name="Pollard J."/>
            <person name="Puri V."/>
            <person name="Reese M.G."/>
            <person name="Reinert K."/>
            <person name="Remington K."/>
            <person name="Saunders R.D.C."/>
            <person name="Scheeler F."/>
            <person name="Shen H."/>
            <person name="Shue B.C."/>
            <person name="Siden-Kiamos I."/>
            <person name="Simpson M."/>
            <person name="Skupski M.P."/>
            <person name="Smith T.J."/>
            <person name="Spier E."/>
            <person name="Spradling A.C."/>
            <person name="Stapleton M."/>
            <person name="Strong R."/>
            <person name="Sun E."/>
            <person name="Svirskas R."/>
            <person name="Tector C."/>
            <person name="Turner R."/>
            <person name="Venter E."/>
            <person name="Wang A.H."/>
            <person name="Wang X."/>
            <person name="Wang Z.-Y."/>
            <person name="Wassarman D.A."/>
            <person name="Weinstock G.M."/>
            <person name="Weissenbach J."/>
            <person name="Williams S.M."/>
            <person name="Woodage T."/>
            <person name="Worley K.C."/>
            <person name="Wu D."/>
            <person name="Yang S."/>
            <person name="Yao Q.A."/>
            <person name="Ye J."/>
            <person name="Yeh R.-F."/>
            <person name="Zaveri J.S."/>
            <person name="Zhan M."/>
            <person name="Zhang G."/>
            <person name="Zhao Q."/>
            <person name="Zheng L."/>
            <person name="Zheng X.H."/>
            <person name="Zhong F.N."/>
            <person name="Zhong W."/>
            <person name="Zhou X."/>
            <person name="Zhu S.C."/>
            <person name="Zhu X."/>
            <person name="Smith H.O."/>
            <person name="Gibbs R.A."/>
            <person name="Myers E.W."/>
            <person name="Rubin G.M."/>
            <person name="Venter J.C."/>
        </authorList>
    </citation>
    <scope>NUCLEOTIDE SEQUENCE [LARGE SCALE GENOMIC DNA]</scope>
    <source>
        <strain>Berkeley</strain>
    </source>
</reference>
<reference key="3">
    <citation type="journal article" date="2002" name="Genome Biol.">
        <title>Annotation of the Drosophila melanogaster euchromatic genome: a systematic review.</title>
        <authorList>
            <person name="Misra S."/>
            <person name="Crosby M.A."/>
            <person name="Mungall C.J."/>
            <person name="Matthews B.B."/>
            <person name="Campbell K.S."/>
            <person name="Hradecky P."/>
            <person name="Huang Y."/>
            <person name="Kaminker J.S."/>
            <person name="Millburn G.H."/>
            <person name="Prochnik S.E."/>
            <person name="Smith C.D."/>
            <person name="Tupy J.L."/>
            <person name="Whitfield E.J."/>
            <person name="Bayraktaroglu L."/>
            <person name="Berman B.P."/>
            <person name="Bettencourt B.R."/>
            <person name="Celniker S.E."/>
            <person name="de Grey A.D.N.J."/>
            <person name="Drysdale R.A."/>
            <person name="Harris N.L."/>
            <person name="Richter J."/>
            <person name="Russo S."/>
            <person name="Schroeder A.J."/>
            <person name="Shu S.Q."/>
            <person name="Stapleton M."/>
            <person name="Yamada C."/>
            <person name="Ashburner M."/>
            <person name="Gelbart W.M."/>
            <person name="Rubin G.M."/>
            <person name="Lewis S.E."/>
        </authorList>
    </citation>
    <scope>GENOME REANNOTATION</scope>
    <source>
        <strain>Berkeley</strain>
    </source>
</reference>
<reference key="4">
    <citation type="journal article" date="2002" name="Genome Biol.">
        <title>A Drosophila full-length cDNA resource.</title>
        <authorList>
            <person name="Stapleton M."/>
            <person name="Carlson J.W."/>
            <person name="Brokstein P."/>
            <person name="Yu C."/>
            <person name="Champe M."/>
            <person name="George R.A."/>
            <person name="Guarin H."/>
            <person name="Kronmiller B."/>
            <person name="Pacleb J.M."/>
            <person name="Park S."/>
            <person name="Wan K.H."/>
            <person name="Rubin G.M."/>
            <person name="Celniker S.E."/>
        </authorList>
    </citation>
    <scope>NUCLEOTIDE SEQUENCE [LARGE SCALE MRNA]</scope>
    <source>
        <strain>Berkeley</strain>
        <tissue>Ovary</tissue>
    </source>
</reference>
<sequence>MKPTCILCLLVVILLHPRISKSSTSGNPSASSSSSSPPEIPAFRQCETIRIEMCRKIGYNETSMPNLVGNEMQTDVEYTLQTFAPLIEYDCSSQLKLFLCAAYVPMCTPKAPVHAIGPCRSLCESVRIRCHPVLQGFGFPWPPALDCDKFPRENNHETMCMEGPGELHQPQQEQDLYGLPGQGIPGGLGGKLPMDCSGLAKSHLYVRLPRSGRCAPLCEADILFTPAEKHLAEIWVSTWAYAALGLALVATVCLLASDGSRLASAKWSRLLSPLIWCHNMVTLGWAVRFMVGRTGTACGTDPQAPNESLLTVDGLSNASCASVFLMRYYFGMAACAWWAVLCLGWHRDIRRHSPDSKGHVVIPSNFGGSPAKRNSAKTAQQDLTQNNFVCFVAWGLPAFQTSAVIVARFVDADELLGACFVGNQSDKALQILVATPVFCYWIFGSMNLISGYLVHCRTKEILRNSNALSVQQQLQQLSAHSSSGIGIFLFIYGLACAMLLLAVIYEFANIDVWLGSGDTNTPLWPFLLRAFMELMLGICCFAWVLGPSISTLYKRQVSNGKMVKHTSAGAATGHLDGHSSSRGSHAACNSTVVSYHSVRTSMASVPLPPSPYKLKTSPGTGSISLNQMSNYSLGRSVHHQQRHSPHHHHHQQQQHHQFHPHHNHQHHSTSSHRLYYPPGSYASQKYSQHGSYYPHLQQYGNETLL</sequence>
<name>FRIZ4_DROME</name>
<evidence type="ECO:0000250" key="1"/>
<evidence type="ECO:0000255" key="2"/>
<evidence type="ECO:0000255" key="3">
    <source>
        <dbReference type="PROSITE-ProRule" id="PRU00090"/>
    </source>
</evidence>
<evidence type="ECO:0000256" key="4">
    <source>
        <dbReference type="SAM" id="MobiDB-lite"/>
    </source>
</evidence>
<evidence type="ECO:0000305" key="5"/>
<accession>Q9NBW1</accession>
<accession>Q9W3S2</accession>
<keyword id="KW-0217">Developmental protein</keyword>
<keyword id="KW-1015">Disulfide bond</keyword>
<keyword id="KW-0297">G-protein coupled receptor</keyword>
<keyword id="KW-0325">Glycoprotein</keyword>
<keyword id="KW-0472">Membrane</keyword>
<keyword id="KW-0675">Receptor</keyword>
<keyword id="KW-1185">Reference proteome</keyword>
<keyword id="KW-0732">Signal</keyword>
<keyword id="KW-0807">Transducer</keyword>
<keyword id="KW-0812">Transmembrane</keyword>
<keyword id="KW-1133">Transmembrane helix</keyword>
<keyword id="KW-0879">Wnt signaling pathway</keyword>
<gene>
    <name type="primary">fz4</name>
    <name type="ORF">CG4626</name>
</gene>
<dbReference type="EMBL" id="AF241270">
    <property type="protein sequence ID" value="AAF81195.1"/>
    <property type="molecule type" value="mRNA"/>
</dbReference>
<dbReference type="EMBL" id="AE014298">
    <property type="protein sequence ID" value="AAN09202.1"/>
    <property type="molecule type" value="Genomic_DNA"/>
</dbReference>
<dbReference type="EMBL" id="AY118543">
    <property type="protein sequence ID" value="AAM49912.1"/>
    <property type="molecule type" value="mRNA"/>
</dbReference>
<dbReference type="RefSeq" id="NP_511068.2">
    <property type="nucleotide sequence ID" value="NM_078513.3"/>
</dbReference>
<dbReference type="RefSeq" id="NP_727170.2">
    <property type="nucleotide sequence ID" value="NM_167119.3"/>
</dbReference>
<dbReference type="SMR" id="Q9NBW1"/>
<dbReference type="BioGRID" id="58135">
    <property type="interactions" value="6"/>
</dbReference>
<dbReference type="FunCoup" id="Q9NBW1">
    <property type="interactions" value="338"/>
</dbReference>
<dbReference type="IntAct" id="Q9NBW1">
    <property type="interactions" value="1"/>
</dbReference>
<dbReference type="MINT" id="Q9NBW1"/>
<dbReference type="STRING" id="7227.FBpp0070977"/>
<dbReference type="GlyCosmos" id="Q9NBW1">
    <property type="glycosylation" value="4 sites, No reported glycans"/>
</dbReference>
<dbReference type="GlyGen" id="Q9NBW1">
    <property type="glycosylation" value="4 sites"/>
</dbReference>
<dbReference type="PaxDb" id="7227-FBpp0070976"/>
<dbReference type="DNASU" id="31659"/>
<dbReference type="EnsemblMetazoa" id="FBtr0071017">
    <property type="protein sequence ID" value="FBpp0070976"/>
    <property type="gene ID" value="FBgn0027342"/>
</dbReference>
<dbReference type="EnsemblMetazoa" id="FBtr0071018">
    <property type="protein sequence ID" value="FBpp0070977"/>
    <property type="gene ID" value="FBgn0027342"/>
</dbReference>
<dbReference type="GeneID" id="31659"/>
<dbReference type="KEGG" id="dme:Dmel_CG4626"/>
<dbReference type="AGR" id="FB:FBgn0027342"/>
<dbReference type="CTD" id="31659"/>
<dbReference type="FlyBase" id="FBgn0027342">
    <property type="gene designation" value="fz4"/>
</dbReference>
<dbReference type="VEuPathDB" id="VectorBase:FBgn0027342"/>
<dbReference type="eggNOG" id="KOG3577">
    <property type="taxonomic scope" value="Eukaryota"/>
</dbReference>
<dbReference type="GeneTree" id="ENSGT00940000157141"/>
<dbReference type="HOGENOM" id="CLU_007873_2_1_1"/>
<dbReference type="InParanoid" id="Q9NBW1"/>
<dbReference type="OMA" id="CHNMVTI"/>
<dbReference type="OrthoDB" id="5959102at2759"/>
<dbReference type="PhylomeDB" id="Q9NBW1"/>
<dbReference type="SignaLink" id="Q9NBW1"/>
<dbReference type="BioGRID-ORCS" id="31659">
    <property type="hits" value="0 hits in 1 CRISPR screen"/>
</dbReference>
<dbReference type="ChiTaRS" id="fz4">
    <property type="organism name" value="fly"/>
</dbReference>
<dbReference type="GenomeRNAi" id="31659"/>
<dbReference type="PRO" id="PR:Q9NBW1"/>
<dbReference type="Proteomes" id="UP000000803">
    <property type="component" value="Chromosome X"/>
</dbReference>
<dbReference type="Bgee" id="FBgn0027342">
    <property type="expression patterns" value="Expressed in adult olfactory receptor neuron Or88a (Drosophila) in antenna and 132 other cell types or tissues"/>
</dbReference>
<dbReference type="ExpressionAtlas" id="Q9NBW1">
    <property type="expression patterns" value="baseline and differential"/>
</dbReference>
<dbReference type="GO" id="GO:0005615">
    <property type="term" value="C:extracellular space"/>
    <property type="evidence" value="ECO:0000318"/>
    <property type="project" value="GO_Central"/>
</dbReference>
<dbReference type="GO" id="GO:0016020">
    <property type="term" value="C:membrane"/>
    <property type="evidence" value="ECO:0000250"/>
    <property type="project" value="FlyBase"/>
</dbReference>
<dbReference type="GO" id="GO:0004930">
    <property type="term" value="F:G protein-coupled receptor activity"/>
    <property type="evidence" value="ECO:0007669"/>
    <property type="project" value="UniProtKB-KW"/>
</dbReference>
<dbReference type="GO" id="GO:0004888">
    <property type="term" value="F:transmembrane signaling receptor activity"/>
    <property type="evidence" value="ECO:0000250"/>
    <property type="project" value="FlyBase"/>
</dbReference>
<dbReference type="GO" id="GO:0017147">
    <property type="term" value="F:Wnt-protein binding"/>
    <property type="evidence" value="ECO:0000353"/>
    <property type="project" value="FlyBase"/>
</dbReference>
<dbReference type="GO" id="GO:0060070">
    <property type="term" value="P:canonical Wnt signaling pathway"/>
    <property type="evidence" value="ECO:0000318"/>
    <property type="project" value="GO_Central"/>
</dbReference>
<dbReference type="GO" id="GO:0035567">
    <property type="term" value="P:non-canonical Wnt signaling pathway"/>
    <property type="evidence" value="ECO:0000318"/>
    <property type="project" value="GO_Central"/>
</dbReference>
<dbReference type="GO" id="GO:0007165">
    <property type="term" value="P:signal transduction"/>
    <property type="evidence" value="ECO:0000250"/>
    <property type="project" value="FlyBase"/>
</dbReference>
<dbReference type="CDD" id="cd13951">
    <property type="entry name" value="7tmF_Frizzled_SMO"/>
    <property type="match status" value="1"/>
</dbReference>
<dbReference type="CDD" id="cd07448">
    <property type="entry name" value="CRD_FZ4"/>
    <property type="match status" value="1"/>
</dbReference>
<dbReference type="FunFam" id="1.20.1070.10:FF:000364">
    <property type="entry name" value="Frizzled receptor 4"/>
    <property type="match status" value="1"/>
</dbReference>
<dbReference type="Gene3D" id="1.10.2000.10">
    <property type="entry name" value="Frizzled cysteine-rich domain"/>
    <property type="match status" value="1"/>
</dbReference>
<dbReference type="Gene3D" id="1.20.1070.10">
    <property type="entry name" value="Rhodopsin 7-helix transmembrane proteins"/>
    <property type="match status" value="1"/>
</dbReference>
<dbReference type="InterPro" id="IPR047105">
    <property type="entry name" value="Frizzled-4/Mom-5_7TM"/>
</dbReference>
<dbReference type="InterPro" id="IPR015526">
    <property type="entry name" value="Frizzled/SFRP"/>
</dbReference>
<dbReference type="InterPro" id="IPR000539">
    <property type="entry name" value="Frizzled/Smoothened_7TM"/>
</dbReference>
<dbReference type="InterPro" id="IPR020067">
    <property type="entry name" value="Frizzled_dom"/>
</dbReference>
<dbReference type="InterPro" id="IPR036790">
    <property type="entry name" value="Frizzled_dom_sf"/>
</dbReference>
<dbReference type="InterPro" id="IPR041765">
    <property type="entry name" value="FZ4_CRD"/>
</dbReference>
<dbReference type="InterPro" id="IPR017981">
    <property type="entry name" value="GPCR_2-like_7TM"/>
</dbReference>
<dbReference type="PANTHER" id="PTHR11309">
    <property type="entry name" value="FRIZZLED"/>
    <property type="match status" value="1"/>
</dbReference>
<dbReference type="PANTHER" id="PTHR11309:SF99">
    <property type="entry name" value="FRIZZLED-4"/>
    <property type="match status" value="1"/>
</dbReference>
<dbReference type="Pfam" id="PF01534">
    <property type="entry name" value="Frizzled"/>
    <property type="match status" value="2"/>
</dbReference>
<dbReference type="Pfam" id="PF01392">
    <property type="entry name" value="Fz"/>
    <property type="match status" value="1"/>
</dbReference>
<dbReference type="PRINTS" id="PR00489">
    <property type="entry name" value="FRIZZLED"/>
</dbReference>
<dbReference type="SMART" id="SM00063">
    <property type="entry name" value="FRI"/>
    <property type="match status" value="1"/>
</dbReference>
<dbReference type="SMART" id="SM01330">
    <property type="entry name" value="Frizzled"/>
    <property type="match status" value="1"/>
</dbReference>
<dbReference type="SUPFAM" id="SSF63501">
    <property type="entry name" value="Frizzled cysteine-rich domain"/>
    <property type="match status" value="1"/>
</dbReference>
<dbReference type="PROSITE" id="PS50038">
    <property type="entry name" value="FZ"/>
    <property type="match status" value="1"/>
</dbReference>
<dbReference type="PROSITE" id="PS50261">
    <property type="entry name" value="G_PROTEIN_RECEP_F2_4"/>
    <property type="match status" value="1"/>
</dbReference>
<feature type="signal peptide" evidence="2">
    <location>
        <begin position="1"/>
        <end position="22"/>
    </location>
</feature>
<feature type="chain" id="PRO_0000013014" description="Frizzled-4">
    <location>
        <begin position="23"/>
        <end position="705"/>
    </location>
</feature>
<feature type="topological domain" description="Extracellular" evidence="2">
    <location>
        <begin position="23"/>
        <end position="233"/>
    </location>
</feature>
<feature type="transmembrane region" description="Helical; Name=1" evidence="2">
    <location>
        <begin position="234"/>
        <end position="254"/>
    </location>
</feature>
<feature type="topological domain" description="Cytoplasmic" evidence="2">
    <location>
        <begin position="255"/>
        <end position="270"/>
    </location>
</feature>
<feature type="transmembrane region" description="Helical; Name=2" evidence="2">
    <location>
        <begin position="271"/>
        <end position="291"/>
    </location>
</feature>
<feature type="topological domain" description="Extracellular" evidence="2">
    <location>
        <begin position="292"/>
        <end position="322"/>
    </location>
</feature>
<feature type="transmembrane region" description="Helical; Name=3" evidence="2">
    <location>
        <begin position="323"/>
        <end position="343"/>
    </location>
</feature>
<feature type="topological domain" description="Cytoplasmic" evidence="2">
    <location>
        <begin position="344"/>
        <end position="386"/>
    </location>
</feature>
<feature type="transmembrane region" description="Helical; Name=4" evidence="2">
    <location>
        <begin position="387"/>
        <end position="407"/>
    </location>
</feature>
<feature type="topological domain" description="Extracellular" evidence="2">
    <location>
        <begin position="408"/>
        <end position="430"/>
    </location>
</feature>
<feature type="transmembrane region" description="Helical; Name=5" evidence="2">
    <location>
        <begin position="431"/>
        <end position="451"/>
    </location>
</feature>
<feature type="topological domain" description="Cytoplasmic" evidence="2">
    <location>
        <begin position="452"/>
        <end position="483"/>
    </location>
</feature>
<feature type="transmembrane region" description="Helical; Name=6" evidence="2">
    <location>
        <begin position="484"/>
        <end position="504"/>
    </location>
</feature>
<feature type="topological domain" description="Extracellular" evidence="2">
    <location>
        <begin position="505"/>
        <end position="529"/>
    </location>
</feature>
<feature type="transmembrane region" description="Helical; Name=7" evidence="2">
    <location>
        <begin position="530"/>
        <end position="550"/>
    </location>
</feature>
<feature type="topological domain" description="Cytoplasmic" evidence="2">
    <location>
        <begin position="551"/>
        <end position="705"/>
    </location>
</feature>
<feature type="domain" description="FZ" evidence="3">
    <location>
        <begin position="41"/>
        <end position="163"/>
    </location>
</feature>
<feature type="region of interest" description="Disordered" evidence="4">
    <location>
        <begin position="21"/>
        <end position="40"/>
    </location>
</feature>
<feature type="region of interest" description="Disordered" evidence="4">
    <location>
        <begin position="635"/>
        <end position="681"/>
    </location>
</feature>
<feature type="short sequence motif" description="PDZ-binding">
    <location>
        <begin position="703"/>
        <end position="705"/>
    </location>
</feature>
<feature type="compositionally biased region" description="Low complexity" evidence="4">
    <location>
        <begin position="21"/>
        <end position="37"/>
    </location>
</feature>
<feature type="compositionally biased region" description="Basic residues" evidence="4">
    <location>
        <begin position="636"/>
        <end position="670"/>
    </location>
</feature>
<feature type="glycosylation site" description="N-linked (GlcNAc...) asparagine" evidence="2">
    <location>
        <position position="60"/>
    </location>
</feature>
<feature type="glycosylation site" description="N-linked (GlcNAc...) asparagine" evidence="2">
    <location>
        <position position="306"/>
    </location>
</feature>
<feature type="glycosylation site" description="N-linked (GlcNAc...) asparagine" evidence="2">
    <location>
        <position position="317"/>
    </location>
</feature>
<feature type="glycosylation site" description="N-linked (GlcNAc...) asparagine" evidence="2">
    <location>
        <position position="423"/>
    </location>
</feature>
<feature type="disulfide bond" evidence="3">
    <location>
        <begin position="46"/>
        <end position="107"/>
    </location>
</feature>
<feature type="disulfide bond" evidence="3">
    <location>
        <begin position="54"/>
        <end position="100"/>
    </location>
</feature>
<feature type="disulfide bond" evidence="3">
    <location>
        <begin position="91"/>
        <end position="130"/>
    </location>
</feature>
<feature type="disulfide bond" evidence="3">
    <location>
        <begin position="119"/>
        <end position="160"/>
    </location>
</feature>
<feature type="disulfide bond" evidence="3">
    <location>
        <begin position="123"/>
        <end position="147"/>
    </location>
</feature>
<protein>
    <recommendedName>
        <fullName>Frizzled-4</fullName>
        <shortName>dFz4</shortName>
    </recommendedName>
</protein>
<proteinExistence type="evidence at transcript level"/>
<organism>
    <name type="scientific">Drosophila melanogaster</name>
    <name type="common">Fruit fly</name>
    <dbReference type="NCBI Taxonomy" id="7227"/>
    <lineage>
        <taxon>Eukaryota</taxon>
        <taxon>Metazoa</taxon>
        <taxon>Ecdysozoa</taxon>
        <taxon>Arthropoda</taxon>
        <taxon>Hexapoda</taxon>
        <taxon>Insecta</taxon>
        <taxon>Pterygota</taxon>
        <taxon>Neoptera</taxon>
        <taxon>Endopterygota</taxon>
        <taxon>Diptera</taxon>
        <taxon>Brachycera</taxon>
        <taxon>Muscomorpha</taxon>
        <taxon>Ephydroidea</taxon>
        <taxon>Drosophilidae</taxon>
        <taxon>Drosophila</taxon>
        <taxon>Sophophora</taxon>
    </lineage>
</organism>
<comment type="function">
    <text>Receptor for Wnt proteins. Most of frizzled receptors are coupled to the beta-catenin canonical signaling pathway, which leads to the activation of disheveled proteins, inhibition of GSK-3 kinase, nuclear accumulation of beta-catenin and activation of Wnt target genes. A second signaling pathway involving PKC and calcium fluxes has been seen for some family members, but it is not yet clear if it represents a distinct pathway or if it can be integrated in the canonical pathway, as PKC seems to be required for Wnt-mediated inactivation of GSK-3 kinase. Both pathways seem to involve interactions with G-proteins. May be involved in transduction and intercellular transmission of polarity information during tissue morphogenesis and/or in differentiated tissues. Required to coordinate the cytoskeletons of epidermal cells to produce a parallel array of cuticular hairs and bristles.</text>
</comment>
<comment type="subcellular location">
    <subcellularLocation>
        <location evidence="5">Membrane</location>
        <topology evidence="5">Multi-pass membrane protein</topology>
    </subcellularLocation>
</comment>
<comment type="domain">
    <text evidence="1">The FZ domain is involved in binding with Wnt ligands.</text>
</comment>
<comment type="similarity">
    <text evidence="5">Belongs to the G-protein coupled receptor Fz/Smo family.</text>
</comment>